<protein>
    <recommendedName>
        <fullName>Thyroid hormone receptor beta</fullName>
    </recommendedName>
    <alternativeName>
        <fullName>Nuclear receptor subfamily 1 group A member 2</fullName>
    </alternativeName>
</protein>
<accession>P68305</accession>
<accession>P18112</accession>
<sequence length="369" mass="42097">MSGYIPSYLDKDELCVVCGDKATGYHYRCITCEGCKGFFRRTIQKNLHPTYSCKYEGKCVIDKVTRNQCQECRFKKCIFVGMATDLVLDDSKRLAKRKLIEENREKRRREELQKTIGHKPEPTDEEWELIKIVTEAHVATNAQGSHWKQKRKFLPEDIGQAPIVNAPEGGKVDLEAFSQFTKIITPAITRVVDFAKKLPMFCELPCEDQIILLKGCCMEIMSLRAAVRYDPESETLTLNGEMAVTRGQLKNGGLGVVSDAIFDLGMSLSSFNLDDTEVALLQAVLLMSSDRPGLVCVERIEKCQEGFLLAFEHYINYRKHHVAHFWPKLLMKVTDLRMIGACHASRFLHMKVECPTELFPPLFLEVFED</sequence>
<dbReference type="EMBL" id="Z49151">
    <property type="protein sequence ID" value="CAA89020.1"/>
    <property type="molecule type" value="mRNA"/>
</dbReference>
<dbReference type="PIR" id="S62741">
    <property type="entry name" value="S58211"/>
</dbReference>
<dbReference type="SMR" id="P68305"/>
<dbReference type="Ensembl" id="ENSCMMT00000020046.1">
    <property type="protein sequence ID" value="ENSCMMP00000018253.1"/>
    <property type="gene ID" value="ENSCMMG00000011561.1"/>
</dbReference>
<dbReference type="Proteomes" id="UP000694556">
    <property type="component" value="Chromosome 2"/>
</dbReference>
<dbReference type="GO" id="GO:0090575">
    <property type="term" value="C:RNA polymerase II transcription regulator complex"/>
    <property type="evidence" value="ECO:0007669"/>
    <property type="project" value="TreeGrafter"/>
</dbReference>
<dbReference type="GO" id="GO:0004879">
    <property type="term" value="F:nuclear receptor activity"/>
    <property type="evidence" value="ECO:0000250"/>
    <property type="project" value="UniProtKB"/>
</dbReference>
<dbReference type="GO" id="GO:0000978">
    <property type="term" value="F:RNA polymerase II cis-regulatory region sequence-specific DNA binding"/>
    <property type="evidence" value="ECO:0007669"/>
    <property type="project" value="TreeGrafter"/>
</dbReference>
<dbReference type="GO" id="GO:0070324">
    <property type="term" value="F:thyroid hormone binding"/>
    <property type="evidence" value="ECO:0000250"/>
    <property type="project" value="UniProtKB"/>
</dbReference>
<dbReference type="GO" id="GO:0008270">
    <property type="term" value="F:zinc ion binding"/>
    <property type="evidence" value="ECO:0007669"/>
    <property type="project" value="UniProtKB-KW"/>
</dbReference>
<dbReference type="GO" id="GO:0030154">
    <property type="term" value="P:cell differentiation"/>
    <property type="evidence" value="ECO:0007669"/>
    <property type="project" value="TreeGrafter"/>
</dbReference>
<dbReference type="GO" id="GO:0000122">
    <property type="term" value="P:negative regulation of transcription by RNA polymerase II"/>
    <property type="evidence" value="ECO:0007669"/>
    <property type="project" value="TreeGrafter"/>
</dbReference>
<dbReference type="GO" id="GO:0045944">
    <property type="term" value="P:positive regulation of transcription by RNA polymerase II"/>
    <property type="evidence" value="ECO:0007669"/>
    <property type="project" value="TreeGrafter"/>
</dbReference>
<dbReference type="GO" id="GO:0048384">
    <property type="term" value="P:retinoic acid receptor signaling pathway"/>
    <property type="evidence" value="ECO:0007669"/>
    <property type="project" value="TreeGrafter"/>
</dbReference>
<dbReference type="GO" id="GO:0002154">
    <property type="term" value="P:thyroid hormone receptor signaling pathway"/>
    <property type="evidence" value="ECO:0007669"/>
    <property type="project" value="TreeGrafter"/>
</dbReference>
<dbReference type="CDD" id="cd06961">
    <property type="entry name" value="NR_DBD_TR"/>
    <property type="match status" value="1"/>
</dbReference>
<dbReference type="CDD" id="cd06935">
    <property type="entry name" value="NR_LBD_TR"/>
    <property type="match status" value="1"/>
</dbReference>
<dbReference type="FunFam" id="1.10.565.10:FF:000006">
    <property type="entry name" value="Thyroid hormone receptor beta 2"/>
    <property type="match status" value="1"/>
</dbReference>
<dbReference type="FunFam" id="3.30.50.10:FF:000011">
    <property type="entry name" value="Thyroid hormone receptor beta isoform"/>
    <property type="match status" value="1"/>
</dbReference>
<dbReference type="Gene3D" id="3.30.50.10">
    <property type="entry name" value="Erythroid Transcription Factor GATA-1, subunit A"/>
    <property type="match status" value="1"/>
</dbReference>
<dbReference type="Gene3D" id="1.10.565.10">
    <property type="entry name" value="Retinoid X Receptor"/>
    <property type="match status" value="1"/>
</dbReference>
<dbReference type="InterPro" id="IPR035500">
    <property type="entry name" value="NHR-like_dom_sf"/>
</dbReference>
<dbReference type="InterPro" id="IPR000536">
    <property type="entry name" value="Nucl_hrmn_rcpt_lig-bd"/>
</dbReference>
<dbReference type="InterPro" id="IPR050234">
    <property type="entry name" value="Nuclear_hormone_rcpt_NR1"/>
</dbReference>
<dbReference type="InterPro" id="IPR001723">
    <property type="entry name" value="Nuclear_hrmn_rcpt"/>
</dbReference>
<dbReference type="InterPro" id="IPR001728">
    <property type="entry name" value="ThyrH_rcpt"/>
</dbReference>
<dbReference type="InterPro" id="IPR001628">
    <property type="entry name" value="Znf_hrmn_rcpt"/>
</dbReference>
<dbReference type="InterPro" id="IPR013088">
    <property type="entry name" value="Znf_NHR/GATA"/>
</dbReference>
<dbReference type="PANTHER" id="PTHR24082">
    <property type="entry name" value="NUCLEAR HORMONE RECEPTOR"/>
    <property type="match status" value="1"/>
</dbReference>
<dbReference type="PANTHER" id="PTHR24082:SF210">
    <property type="entry name" value="THYROID HORMONE RECEPTOR BETA"/>
    <property type="match status" value="1"/>
</dbReference>
<dbReference type="Pfam" id="PF00104">
    <property type="entry name" value="Hormone_recep"/>
    <property type="match status" value="1"/>
</dbReference>
<dbReference type="Pfam" id="PF00105">
    <property type="entry name" value="zf-C4"/>
    <property type="match status" value="1"/>
</dbReference>
<dbReference type="PRINTS" id="PR00398">
    <property type="entry name" value="STRDHORMONER"/>
</dbReference>
<dbReference type="PRINTS" id="PR00047">
    <property type="entry name" value="STROIDFINGER"/>
</dbReference>
<dbReference type="PRINTS" id="PR00546">
    <property type="entry name" value="THYROIDHORMR"/>
</dbReference>
<dbReference type="SMART" id="SM00430">
    <property type="entry name" value="HOLI"/>
    <property type="match status" value="1"/>
</dbReference>
<dbReference type="SMART" id="SM00399">
    <property type="entry name" value="ZnF_C4"/>
    <property type="match status" value="1"/>
</dbReference>
<dbReference type="SUPFAM" id="SSF57716">
    <property type="entry name" value="Glucocorticoid receptor-like (DNA-binding domain)"/>
    <property type="match status" value="1"/>
</dbReference>
<dbReference type="SUPFAM" id="SSF48508">
    <property type="entry name" value="Nuclear receptor ligand-binding domain"/>
    <property type="match status" value="1"/>
</dbReference>
<dbReference type="PROSITE" id="PS51843">
    <property type="entry name" value="NR_LBD"/>
    <property type="match status" value="1"/>
</dbReference>
<dbReference type="PROSITE" id="PS00031">
    <property type="entry name" value="NUCLEAR_REC_DBD_1"/>
    <property type="match status" value="1"/>
</dbReference>
<dbReference type="PROSITE" id="PS51030">
    <property type="entry name" value="NUCLEAR_REC_DBD_2"/>
    <property type="match status" value="1"/>
</dbReference>
<organism>
    <name type="scientific">Cairina moschata</name>
    <name type="common">Muscovy duck</name>
    <dbReference type="NCBI Taxonomy" id="8855"/>
    <lineage>
        <taxon>Eukaryota</taxon>
        <taxon>Metazoa</taxon>
        <taxon>Chordata</taxon>
        <taxon>Craniata</taxon>
        <taxon>Vertebrata</taxon>
        <taxon>Euteleostomi</taxon>
        <taxon>Archelosauria</taxon>
        <taxon>Archosauria</taxon>
        <taxon>Dinosauria</taxon>
        <taxon>Saurischia</taxon>
        <taxon>Theropoda</taxon>
        <taxon>Coelurosauria</taxon>
        <taxon>Aves</taxon>
        <taxon>Neognathae</taxon>
        <taxon>Galloanserae</taxon>
        <taxon>Anseriformes</taxon>
        <taxon>Anatidae</taxon>
        <taxon>Anatinae</taxon>
        <taxon>Cairina</taxon>
    </lineage>
</organism>
<reference key="1">
    <citation type="submission" date="1995-07" db="EMBL/GenBank/DDBJ databases">
        <title>Molecular cloning and sequencing of a cDNA encoding the duckling beta thyroid hormone receptor.</title>
        <authorList>
            <person name="Lachuer J.L."/>
            <person name="Legras C.L."/>
            <person name="Ronfort C.R."/>
            <person name="Barges S.B."/>
            <person name="Cohen-Adad F.C."/>
            <person name="Quivet L.Q."/>
            <person name="Duchamp C.D."/>
            <person name="Verdier G.V."/>
            <person name="Barre H.B."/>
        </authorList>
    </citation>
    <scope>NUCLEOTIDE SEQUENCE [MRNA]</scope>
    <source>
        <strain>R31 INRA</strain>
        <tissue>Liver</tissue>
    </source>
</reference>
<evidence type="ECO:0000250" key="1">
    <source>
        <dbReference type="UniProtKB" id="P10828"/>
    </source>
</evidence>
<evidence type="ECO:0000255" key="2"/>
<evidence type="ECO:0000255" key="3">
    <source>
        <dbReference type="PROSITE-ProRule" id="PRU00407"/>
    </source>
</evidence>
<evidence type="ECO:0000255" key="4">
    <source>
        <dbReference type="PROSITE-ProRule" id="PRU01189"/>
    </source>
</evidence>
<evidence type="ECO:0000305" key="5"/>
<gene>
    <name type="primary">THRB</name>
    <name type="synonym">NR1A2</name>
</gene>
<keyword id="KW-0238">DNA-binding</keyword>
<keyword id="KW-0479">Metal-binding</keyword>
<keyword id="KW-0539">Nucleus</keyword>
<keyword id="KW-0675">Receptor</keyword>
<keyword id="KW-1185">Reference proteome</keyword>
<keyword id="KW-0804">Transcription</keyword>
<keyword id="KW-0805">Transcription regulation</keyword>
<keyword id="KW-0862">Zinc</keyword>
<keyword id="KW-0863">Zinc-finger</keyword>
<feature type="chain" id="PRO_0000053453" description="Thyroid hormone receptor beta">
    <location>
        <begin position="1"/>
        <end position="369"/>
    </location>
</feature>
<feature type="domain" description="NR LBD" evidence="4">
    <location>
        <begin position="125"/>
        <end position="369"/>
    </location>
</feature>
<feature type="DNA-binding region" description="Nuclear receptor" evidence="3">
    <location>
        <begin position="15"/>
        <end position="89"/>
    </location>
</feature>
<feature type="zinc finger region" description="NR C4-type" evidence="3">
    <location>
        <begin position="15"/>
        <end position="35"/>
    </location>
</feature>
<feature type="zinc finger region" description="NR C4-type" evidence="3">
    <location>
        <begin position="53"/>
        <end position="77"/>
    </location>
</feature>
<feature type="region of interest" description="Modulating" evidence="2">
    <location>
        <begin position="1"/>
        <end position="14"/>
    </location>
</feature>
<feature type="binding site" evidence="1">
    <location>
        <position position="15"/>
    </location>
    <ligand>
        <name>Zn(2+)</name>
        <dbReference type="ChEBI" id="CHEBI:29105"/>
        <label>1</label>
    </ligand>
</feature>
<feature type="binding site" evidence="1">
    <location>
        <position position="18"/>
    </location>
    <ligand>
        <name>Zn(2+)</name>
        <dbReference type="ChEBI" id="CHEBI:29105"/>
        <label>1</label>
    </ligand>
</feature>
<feature type="binding site" evidence="1">
    <location>
        <position position="32"/>
    </location>
    <ligand>
        <name>Zn(2+)</name>
        <dbReference type="ChEBI" id="CHEBI:29105"/>
        <label>1</label>
    </ligand>
</feature>
<feature type="binding site" evidence="1">
    <location>
        <position position="35"/>
    </location>
    <ligand>
        <name>Zn(2+)</name>
        <dbReference type="ChEBI" id="CHEBI:29105"/>
        <label>1</label>
    </ligand>
</feature>
<feature type="binding site" evidence="1">
    <location>
        <position position="53"/>
    </location>
    <ligand>
        <name>Zn(2+)</name>
        <dbReference type="ChEBI" id="CHEBI:29105"/>
        <label>2</label>
    </ligand>
</feature>
<feature type="binding site" evidence="1">
    <location>
        <position position="59"/>
    </location>
    <ligand>
        <name>Zn(2+)</name>
        <dbReference type="ChEBI" id="CHEBI:29105"/>
        <label>2</label>
    </ligand>
</feature>
<feature type="binding site" evidence="1">
    <location>
        <position position="69"/>
    </location>
    <ligand>
        <name>Zn(2+)</name>
        <dbReference type="ChEBI" id="CHEBI:29105"/>
        <label>2</label>
    </ligand>
</feature>
<feature type="binding site" evidence="1">
    <location>
        <position position="72"/>
    </location>
    <ligand>
        <name>Zn(2+)</name>
        <dbReference type="ChEBI" id="CHEBI:29105"/>
        <label>2</label>
    </ligand>
</feature>
<feature type="binding site" evidence="1">
    <location>
        <position position="190"/>
    </location>
    <ligand>
        <name>3,3',5-triiodo-L-thyronine</name>
        <dbReference type="ChEBI" id="CHEBI:533015"/>
    </ligand>
</feature>
<feature type="binding site" evidence="1">
    <location>
        <position position="190"/>
    </location>
    <ligand>
        <name>L-thyroxine</name>
        <dbReference type="ChEBI" id="CHEBI:58448"/>
    </ligand>
</feature>
<feature type="binding site" evidence="1">
    <location>
        <position position="239"/>
    </location>
    <ligand>
        <name>3,3',5-triiodo-L-thyronine</name>
        <dbReference type="ChEBI" id="CHEBI:533015"/>
    </ligand>
</feature>
<feature type="binding site" evidence="1">
    <location>
        <position position="239"/>
    </location>
    <ligand>
        <name>L-thyroxine</name>
        <dbReference type="ChEBI" id="CHEBI:58448"/>
    </ligand>
</feature>
<feature type="binding site" evidence="1">
    <location>
        <position position="343"/>
    </location>
    <ligand>
        <name>3,3',5-triiodo-L-thyronine</name>
        <dbReference type="ChEBI" id="CHEBI:533015"/>
        <label>1</label>
    </ligand>
</feature>
<feature type="binding site" evidence="1">
    <location>
        <position position="343"/>
    </location>
    <ligand>
        <name>L-thyroxine</name>
        <dbReference type="ChEBI" id="CHEBI:58448"/>
    </ligand>
</feature>
<proteinExistence type="evidence at transcript level"/>
<name>THB_CAIMO</name>
<comment type="function">
    <text>Nuclear hormone receptor that can act as a repressor or activator of transcription. High affinity receptor for thyroid hormones, including triiodothyronine and thyroxine.</text>
</comment>
<comment type="subcellular location">
    <subcellularLocation>
        <location>Nucleus</location>
    </subcellularLocation>
</comment>
<comment type="domain">
    <text>Composed of three domains: a modulating N-terminal domain, a DNA-binding domain and a C-terminal ligand-binding domain.</text>
</comment>
<comment type="similarity">
    <text evidence="5">Belongs to the nuclear hormone receptor family. NR1 subfamily.</text>
</comment>